<reference key="1">
    <citation type="journal article" date="2005" name="Science">
        <title>The transcriptional landscape of the mammalian genome.</title>
        <authorList>
            <person name="Carninci P."/>
            <person name="Kasukawa T."/>
            <person name="Katayama S."/>
            <person name="Gough J."/>
            <person name="Frith M.C."/>
            <person name="Maeda N."/>
            <person name="Oyama R."/>
            <person name="Ravasi T."/>
            <person name="Lenhard B."/>
            <person name="Wells C."/>
            <person name="Kodzius R."/>
            <person name="Shimokawa K."/>
            <person name="Bajic V.B."/>
            <person name="Brenner S.E."/>
            <person name="Batalov S."/>
            <person name="Forrest A.R."/>
            <person name="Zavolan M."/>
            <person name="Davis M.J."/>
            <person name="Wilming L.G."/>
            <person name="Aidinis V."/>
            <person name="Allen J.E."/>
            <person name="Ambesi-Impiombato A."/>
            <person name="Apweiler R."/>
            <person name="Aturaliya R.N."/>
            <person name="Bailey T.L."/>
            <person name="Bansal M."/>
            <person name="Baxter L."/>
            <person name="Beisel K.W."/>
            <person name="Bersano T."/>
            <person name="Bono H."/>
            <person name="Chalk A.M."/>
            <person name="Chiu K.P."/>
            <person name="Choudhary V."/>
            <person name="Christoffels A."/>
            <person name="Clutterbuck D.R."/>
            <person name="Crowe M.L."/>
            <person name="Dalla E."/>
            <person name="Dalrymple B.P."/>
            <person name="de Bono B."/>
            <person name="Della Gatta G."/>
            <person name="di Bernardo D."/>
            <person name="Down T."/>
            <person name="Engstrom P."/>
            <person name="Fagiolini M."/>
            <person name="Faulkner G."/>
            <person name="Fletcher C.F."/>
            <person name="Fukushima T."/>
            <person name="Furuno M."/>
            <person name="Futaki S."/>
            <person name="Gariboldi M."/>
            <person name="Georgii-Hemming P."/>
            <person name="Gingeras T.R."/>
            <person name="Gojobori T."/>
            <person name="Green R.E."/>
            <person name="Gustincich S."/>
            <person name="Harbers M."/>
            <person name="Hayashi Y."/>
            <person name="Hensch T.K."/>
            <person name="Hirokawa N."/>
            <person name="Hill D."/>
            <person name="Huminiecki L."/>
            <person name="Iacono M."/>
            <person name="Ikeo K."/>
            <person name="Iwama A."/>
            <person name="Ishikawa T."/>
            <person name="Jakt M."/>
            <person name="Kanapin A."/>
            <person name="Katoh M."/>
            <person name="Kawasawa Y."/>
            <person name="Kelso J."/>
            <person name="Kitamura H."/>
            <person name="Kitano H."/>
            <person name="Kollias G."/>
            <person name="Krishnan S.P."/>
            <person name="Kruger A."/>
            <person name="Kummerfeld S.K."/>
            <person name="Kurochkin I.V."/>
            <person name="Lareau L.F."/>
            <person name="Lazarevic D."/>
            <person name="Lipovich L."/>
            <person name="Liu J."/>
            <person name="Liuni S."/>
            <person name="McWilliam S."/>
            <person name="Madan Babu M."/>
            <person name="Madera M."/>
            <person name="Marchionni L."/>
            <person name="Matsuda H."/>
            <person name="Matsuzawa S."/>
            <person name="Miki H."/>
            <person name="Mignone F."/>
            <person name="Miyake S."/>
            <person name="Morris K."/>
            <person name="Mottagui-Tabar S."/>
            <person name="Mulder N."/>
            <person name="Nakano N."/>
            <person name="Nakauchi H."/>
            <person name="Ng P."/>
            <person name="Nilsson R."/>
            <person name="Nishiguchi S."/>
            <person name="Nishikawa S."/>
            <person name="Nori F."/>
            <person name="Ohara O."/>
            <person name="Okazaki Y."/>
            <person name="Orlando V."/>
            <person name="Pang K.C."/>
            <person name="Pavan W.J."/>
            <person name="Pavesi G."/>
            <person name="Pesole G."/>
            <person name="Petrovsky N."/>
            <person name="Piazza S."/>
            <person name="Reed J."/>
            <person name="Reid J.F."/>
            <person name="Ring B.Z."/>
            <person name="Ringwald M."/>
            <person name="Rost B."/>
            <person name="Ruan Y."/>
            <person name="Salzberg S.L."/>
            <person name="Sandelin A."/>
            <person name="Schneider C."/>
            <person name="Schoenbach C."/>
            <person name="Sekiguchi K."/>
            <person name="Semple C.A."/>
            <person name="Seno S."/>
            <person name="Sessa L."/>
            <person name="Sheng Y."/>
            <person name="Shibata Y."/>
            <person name="Shimada H."/>
            <person name="Shimada K."/>
            <person name="Silva D."/>
            <person name="Sinclair B."/>
            <person name="Sperling S."/>
            <person name="Stupka E."/>
            <person name="Sugiura K."/>
            <person name="Sultana R."/>
            <person name="Takenaka Y."/>
            <person name="Taki K."/>
            <person name="Tammoja K."/>
            <person name="Tan S.L."/>
            <person name="Tang S."/>
            <person name="Taylor M.S."/>
            <person name="Tegner J."/>
            <person name="Teichmann S.A."/>
            <person name="Ueda H.R."/>
            <person name="van Nimwegen E."/>
            <person name="Verardo R."/>
            <person name="Wei C.L."/>
            <person name="Yagi K."/>
            <person name="Yamanishi H."/>
            <person name="Zabarovsky E."/>
            <person name="Zhu S."/>
            <person name="Zimmer A."/>
            <person name="Hide W."/>
            <person name="Bult C."/>
            <person name="Grimmond S.M."/>
            <person name="Teasdale R.D."/>
            <person name="Liu E.T."/>
            <person name="Brusic V."/>
            <person name="Quackenbush J."/>
            <person name="Wahlestedt C."/>
            <person name="Mattick J.S."/>
            <person name="Hume D.A."/>
            <person name="Kai C."/>
            <person name="Sasaki D."/>
            <person name="Tomaru Y."/>
            <person name="Fukuda S."/>
            <person name="Kanamori-Katayama M."/>
            <person name="Suzuki M."/>
            <person name="Aoki J."/>
            <person name="Arakawa T."/>
            <person name="Iida J."/>
            <person name="Imamura K."/>
            <person name="Itoh M."/>
            <person name="Kato T."/>
            <person name="Kawaji H."/>
            <person name="Kawagashira N."/>
            <person name="Kawashima T."/>
            <person name="Kojima M."/>
            <person name="Kondo S."/>
            <person name="Konno H."/>
            <person name="Nakano K."/>
            <person name="Ninomiya N."/>
            <person name="Nishio T."/>
            <person name="Okada M."/>
            <person name="Plessy C."/>
            <person name="Shibata K."/>
            <person name="Shiraki T."/>
            <person name="Suzuki S."/>
            <person name="Tagami M."/>
            <person name="Waki K."/>
            <person name="Watahiki A."/>
            <person name="Okamura-Oho Y."/>
            <person name="Suzuki H."/>
            <person name="Kawai J."/>
            <person name="Hayashizaki Y."/>
        </authorList>
    </citation>
    <scope>NUCLEOTIDE SEQUENCE [LARGE SCALE MRNA]</scope>
    <source>
        <strain>C57BL/6J</strain>
        <tissue>Bone marrow</tissue>
        <tissue>Embryonic head</tissue>
    </source>
</reference>
<reference key="2">
    <citation type="journal article" date="2004" name="Genome Res.">
        <title>The status, quality, and expansion of the NIH full-length cDNA project: the Mammalian Gene Collection (MGC).</title>
        <authorList>
            <consortium name="The MGC Project Team"/>
        </authorList>
    </citation>
    <scope>NUCLEOTIDE SEQUENCE [LARGE SCALE MRNA]</scope>
    <source>
        <strain>129</strain>
        <tissue>Mammary tumor</tissue>
    </source>
</reference>
<sequence length="297" mass="33724">MCAQRVTDTPEVKWQKVLYERQPFPDNYVDQRFLEELRKNIYARKYQYWAVVFESSVVIQQLCSVCVFVVIWWYMDEGLLAPQWLFGTGLASSLVGYVLFDLIDGGDGRKKSGRTRWADLKSTLVFITFTYGFSPVLKTLTESVSTDTIYAMAVFMLLGHLIFFDYGANAAIVSSTLSLNMAIFASVCLASRLPRSLHAFIMVTFAIQIFALWPMLQKKLKAYTPRSYVGVTLLFAFSAFGGLLSISAVGAILFALLLFSISCLCPYYLIHLQLFKENIHGPWDEAEIKEDLSRFLS</sequence>
<evidence type="ECO:0000250" key="1">
    <source>
        <dbReference type="UniProtKB" id="Q92535"/>
    </source>
</evidence>
<evidence type="ECO:0000255" key="2"/>
<evidence type="ECO:0000305" key="3"/>
<evidence type="ECO:0000312" key="4">
    <source>
        <dbReference type="MGI" id="MGI:1914542"/>
    </source>
</evidence>
<accession>Q9CXR4</accession>
<accession>Q3U7H3</accession>
<proteinExistence type="evidence at transcript level"/>
<dbReference type="EMBL" id="AK014096">
    <property type="protein sequence ID" value="BAB29152.1"/>
    <property type="molecule type" value="mRNA"/>
</dbReference>
<dbReference type="EMBL" id="AK152660">
    <property type="protein sequence ID" value="BAE31396.1"/>
    <property type="molecule type" value="mRNA"/>
</dbReference>
<dbReference type="EMBL" id="BC006938">
    <property type="protein sequence ID" value="AAH06938.1"/>
    <property type="molecule type" value="mRNA"/>
</dbReference>
<dbReference type="CCDS" id="CCDS15419.1"/>
<dbReference type="RefSeq" id="NP_001034134.1">
    <property type="nucleotide sequence ID" value="NM_001039045.1"/>
</dbReference>
<dbReference type="RefSeq" id="NP_080354.1">
    <property type="nucleotide sequence ID" value="NM_026078.2"/>
</dbReference>
<dbReference type="RefSeq" id="XP_006497022.1">
    <property type="nucleotide sequence ID" value="XM_006496959.3"/>
</dbReference>
<dbReference type="RefSeq" id="XP_030098184.1">
    <property type="nucleotide sequence ID" value="XM_030242324.2"/>
</dbReference>
<dbReference type="RefSeq" id="XP_036009010.1">
    <property type="nucleotide sequence ID" value="XM_036153117.1"/>
</dbReference>
<dbReference type="BioGRID" id="212080">
    <property type="interactions" value="1"/>
</dbReference>
<dbReference type="FunCoup" id="Q9CXR4">
    <property type="interactions" value="1867"/>
</dbReference>
<dbReference type="STRING" id="10090.ENSMUSP00000141646"/>
<dbReference type="PhosphoSitePlus" id="Q9CXR4"/>
<dbReference type="SwissPalm" id="Q9CXR4"/>
<dbReference type="PaxDb" id="10090-ENSMUSP00000107221"/>
<dbReference type="ProteomicsDB" id="288206"/>
<dbReference type="Antibodypedia" id="34384">
    <property type="antibodies" value="83 antibodies from 23 providers"/>
</dbReference>
<dbReference type="DNASU" id="67292"/>
<dbReference type="Ensembl" id="ENSMUST00000028021.7">
    <property type="protein sequence ID" value="ENSMUSP00000028021.7"/>
    <property type="gene ID" value="ENSMUSG00000026698.9"/>
</dbReference>
<dbReference type="Ensembl" id="ENSMUST00000111594.3">
    <property type="protein sequence ID" value="ENSMUSP00000107221.3"/>
    <property type="gene ID" value="ENSMUSG00000026698.9"/>
</dbReference>
<dbReference type="Ensembl" id="ENSMUST00000193784.2">
    <property type="protein sequence ID" value="ENSMUSP00000141646.2"/>
    <property type="gene ID" value="ENSMUSG00000026698.9"/>
</dbReference>
<dbReference type="GeneID" id="67292"/>
<dbReference type="KEGG" id="mmu:67292"/>
<dbReference type="UCSC" id="uc007dfx.1">
    <property type="organism name" value="mouse"/>
</dbReference>
<dbReference type="AGR" id="MGI:1914542"/>
<dbReference type="CTD" id="5279"/>
<dbReference type="MGI" id="MGI:1914542">
    <property type="gene designation" value="Pigc"/>
</dbReference>
<dbReference type="VEuPathDB" id="HostDB:ENSMUSG00000026698"/>
<dbReference type="eggNOG" id="KOG3059">
    <property type="taxonomic scope" value="Eukaryota"/>
</dbReference>
<dbReference type="GeneTree" id="ENSGT00390000005496"/>
<dbReference type="HOGENOM" id="CLU_024002_0_0_1"/>
<dbReference type="InParanoid" id="Q9CXR4"/>
<dbReference type="OMA" id="STSYHAF"/>
<dbReference type="OrthoDB" id="196709at2759"/>
<dbReference type="PhylomeDB" id="Q9CXR4"/>
<dbReference type="TreeFam" id="TF314325"/>
<dbReference type="Reactome" id="R-MMU-162710">
    <property type="pathway name" value="Synthesis of glycosylphosphatidylinositol (GPI)"/>
</dbReference>
<dbReference type="UniPathway" id="UPA00196"/>
<dbReference type="BioGRID-ORCS" id="67292">
    <property type="hits" value="7 hits in 78 CRISPR screens"/>
</dbReference>
<dbReference type="ChiTaRS" id="Pigc">
    <property type="organism name" value="mouse"/>
</dbReference>
<dbReference type="PRO" id="PR:Q9CXR4"/>
<dbReference type="Proteomes" id="UP000000589">
    <property type="component" value="Chromosome 1"/>
</dbReference>
<dbReference type="RNAct" id="Q9CXR4">
    <property type="molecule type" value="protein"/>
</dbReference>
<dbReference type="Bgee" id="ENSMUSG00000026698">
    <property type="expression patterns" value="Expressed in small intestine Peyer's patch and 237 other cell types or tissues"/>
</dbReference>
<dbReference type="ExpressionAtlas" id="Q9CXR4">
    <property type="expression patterns" value="baseline and differential"/>
</dbReference>
<dbReference type="GO" id="GO:0000506">
    <property type="term" value="C:glycosylphosphatidylinositol-N-acetylglucosaminyltransferase (GPI-GnT) complex"/>
    <property type="evidence" value="ECO:0000250"/>
    <property type="project" value="UniProtKB"/>
</dbReference>
<dbReference type="GO" id="GO:0006506">
    <property type="term" value="P:GPI anchor biosynthetic process"/>
    <property type="evidence" value="ECO:0000250"/>
    <property type="project" value="UniProtKB"/>
</dbReference>
<dbReference type="InterPro" id="IPR009450">
    <property type="entry name" value="Plno_GlcNAc_GPI2"/>
</dbReference>
<dbReference type="PANTHER" id="PTHR12982">
    <property type="entry name" value="PHOSPHATIDYLINOSITOL GLYCAN, CLASS C"/>
    <property type="match status" value="1"/>
</dbReference>
<dbReference type="PANTHER" id="PTHR12982:SF0">
    <property type="entry name" value="PHOSPHATIDYLINOSITOL N-ACETYLGLUCOSAMINYLTRANSFERASE SUBUNIT C"/>
    <property type="match status" value="1"/>
</dbReference>
<dbReference type="Pfam" id="PF06432">
    <property type="entry name" value="GPI2"/>
    <property type="match status" value="1"/>
</dbReference>
<dbReference type="PIRSF" id="PIRSF016104">
    <property type="entry name" value="GPI2"/>
    <property type="match status" value="1"/>
</dbReference>
<name>PIGC_MOUSE</name>
<organism>
    <name type="scientific">Mus musculus</name>
    <name type="common">Mouse</name>
    <dbReference type="NCBI Taxonomy" id="10090"/>
    <lineage>
        <taxon>Eukaryota</taxon>
        <taxon>Metazoa</taxon>
        <taxon>Chordata</taxon>
        <taxon>Craniata</taxon>
        <taxon>Vertebrata</taxon>
        <taxon>Euteleostomi</taxon>
        <taxon>Mammalia</taxon>
        <taxon>Eutheria</taxon>
        <taxon>Euarchontoglires</taxon>
        <taxon>Glires</taxon>
        <taxon>Rodentia</taxon>
        <taxon>Myomorpha</taxon>
        <taxon>Muroidea</taxon>
        <taxon>Muridae</taxon>
        <taxon>Murinae</taxon>
        <taxon>Mus</taxon>
        <taxon>Mus</taxon>
    </lineage>
</organism>
<feature type="chain" id="PRO_0000058432" description="Phosphatidylinositol N-acetylglucosaminyltransferase subunit C">
    <location>
        <begin position="1"/>
        <end position="297"/>
    </location>
</feature>
<feature type="transmembrane region" description="Helical" evidence="2">
    <location>
        <begin position="67"/>
        <end position="87"/>
    </location>
</feature>
<feature type="transmembrane region" description="Helical" evidence="2">
    <location>
        <begin position="88"/>
        <end position="108"/>
    </location>
</feature>
<feature type="transmembrane region" description="Helical" evidence="2">
    <location>
        <begin position="153"/>
        <end position="173"/>
    </location>
</feature>
<feature type="transmembrane region" description="Helical" evidence="2">
    <location>
        <begin position="239"/>
        <end position="259"/>
    </location>
</feature>
<protein>
    <recommendedName>
        <fullName evidence="3">Phosphatidylinositol N-acetylglucosaminyltransferase subunit C</fullName>
    </recommendedName>
    <alternativeName>
        <fullName>Phosphatidylinositol-glycan biosynthesis class C protein</fullName>
        <shortName>PIG-C</shortName>
    </alternativeName>
</protein>
<keyword id="KW-0256">Endoplasmic reticulum</keyword>
<keyword id="KW-0337">GPI-anchor biosynthesis</keyword>
<keyword id="KW-0472">Membrane</keyword>
<keyword id="KW-1185">Reference proteome</keyword>
<keyword id="KW-0812">Transmembrane</keyword>
<keyword id="KW-1133">Transmembrane helix</keyword>
<gene>
    <name evidence="4" type="primary">Pigc</name>
</gene>
<comment type="function">
    <text evidence="1">Part of the glycosylphosphatidylinositol-N-acetylglucosaminyltransferase (GPI-GnT) complex that catalyzes the transfer of N-acetylglucosamine from UDP-N-acetylglucosamine to phosphatidylinositol and participates in the first step of GPI biosynthesis.</text>
</comment>
<comment type="pathway">
    <text evidence="1">Glycolipid biosynthesis; glycosylphosphatidylinositol-anchor biosynthesis.</text>
</comment>
<comment type="subunit">
    <text evidence="1">Component of the glycosylphosphatidylinositol-N-acetylglucosaminyltransferase (GPI-GnT) complex composed at least by PIGA, PIGC, PIGH, PIGP, PIGQ, PIGY and DPM2. Interacts with PIGQ. Interacts with the heterodimer PIGA:PIGH.</text>
</comment>
<comment type="subcellular location">
    <subcellularLocation>
        <location evidence="1">Endoplasmic reticulum membrane</location>
        <topology evidence="1">Multi-pass membrane protein</topology>
    </subcellularLocation>
</comment>
<comment type="similarity">
    <text evidence="3">Belongs to the PIGC family.</text>
</comment>